<gene>
    <name evidence="1" type="primary">rhaS</name>
    <name type="ordered locus">YpsIP31758_3754</name>
</gene>
<comment type="function">
    <text evidence="1">Activates expression of the rhaBAD and rhaT operons.</text>
</comment>
<comment type="subunit">
    <text evidence="1">Binds DNA as a dimer.</text>
</comment>
<comment type="subcellular location">
    <subcellularLocation>
        <location evidence="1">Cytoplasm</location>
    </subcellularLocation>
</comment>
<reference key="1">
    <citation type="journal article" date="2007" name="PLoS Genet.">
        <title>The complete genome sequence of Yersinia pseudotuberculosis IP31758, the causative agent of Far East scarlet-like fever.</title>
        <authorList>
            <person name="Eppinger M."/>
            <person name="Rosovitz M.J."/>
            <person name="Fricke W.F."/>
            <person name="Rasko D.A."/>
            <person name="Kokorina G."/>
            <person name="Fayolle C."/>
            <person name="Lindler L.E."/>
            <person name="Carniel E."/>
            <person name="Ravel J."/>
        </authorList>
    </citation>
    <scope>NUCLEOTIDE SEQUENCE [LARGE SCALE GENOMIC DNA]</scope>
    <source>
        <strain>IP 31758</strain>
    </source>
</reference>
<protein>
    <recommendedName>
        <fullName evidence="1">HTH-type transcriptional activator RhaS</fullName>
    </recommendedName>
    <alternativeName>
        <fullName evidence="1">L-rhamnose operon regulatory protein RhaS</fullName>
    </alternativeName>
</protein>
<keyword id="KW-0010">Activator</keyword>
<keyword id="KW-0963">Cytoplasm</keyword>
<keyword id="KW-0238">DNA-binding</keyword>
<keyword id="KW-0677">Repeat</keyword>
<keyword id="KW-0684">Rhamnose metabolism</keyword>
<keyword id="KW-0804">Transcription</keyword>
<keyword id="KW-0805">Transcription regulation</keyword>
<organism>
    <name type="scientific">Yersinia pseudotuberculosis serotype O:1b (strain IP 31758)</name>
    <dbReference type="NCBI Taxonomy" id="349747"/>
    <lineage>
        <taxon>Bacteria</taxon>
        <taxon>Pseudomonadati</taxon>
        <taxon>Pseudomonadota</taxon>
        <taxon>Gammaproteobacteria</taxon>
        <taxon>Enterobacterales</taxon>
        <taxon>Yersiniaceae</taxon>
        <taxon>Yersinia</taxon>
    </lineage>
</organism>
<accession>A7FN80</accession>
<evidence type="ECO:0000255" key="1">
    <source>
        <dbReference type="HAMAP-Rule" id="MF_01534"/>
    </source>
</evidence>
<name>RHAS_YERP3</name>
<feature type="chain" id="PRO_1000068711" description="HTH-type transcriptional activator RhaS">
    <location>
        <begin position="1"/>
        <end position="273"/>
    </location>
</feature>
<feature type="domain" description="HTH araC/xylS-type" evidence="1">
    <location>
        <begin position="174"/>
        <end position="272"/>
    </location>
</feature>
<feature type="DNA-binding region" description="H-T-H motif" evidence="1">
    <location>
        <begin position="191"/>
        <end position="212"/>
    </location>
</feature>
<feature type="DNA-binding region" description="H-T-H motif" evidence="1">
    <location>
        <begin position="239"/>
        <end position="262"/>
    </location>
</feature>
<feature type="site" description="Interaction with sigma-70" evidence="1">
    <location>
        <position position="241"/>
    </location>
</feature>
<feature type="site" description="Interaction with sigma-70" evidence="1">
    <location>
        <position position="250"/>
    </location>
</feature>
<sequence>MTVLHSIDFFSSSSAPVAIEARAPQSAFPEHHHDFYEIVIVEEGAGVHVFNGNPYTLSRGCVCFVRDHDRHLFESTDDLFLTNVLFRAPDAFRFLSGVGHFLPRECDGVYPSHWRVNGQVLQQIKCLIACLEHAPKSDQVEDIALHESVFMQLLVKLWQGCQTQAGDDQEGRLYQLLDWLQNNYSEAVEWPELADRFALPLRTLHRQLKNKTGMTPQRYLTRLRLLQARHQLCYSDNSVTDIAYLCGFGDSNHFSTLFKREFSQSPRDLRSQL</sequence>
<proteinExistence type="inferred from homology"/>
<dbReference type="EMBL" id="CP000720">
    <property type="protein sequence ID" value="ABS46159.1"/>
    <property type="molecule type" value="Genomic_DNA"/>
</dbReference>
<dbReference type="RefSeq" id="WP_011906460.1">
    <property type="nucleotide sequence ID" value="NC_009708.1"/>
</dbReference>
<dbReference type="SMR" id="A7FN80"/>
<dbReference type="GeneID" id="49787619"/>
<dbReference type="KEGG" id="ypi:YpsIP31758_3754"/>
<dbReference type="HOGENOM" id="CLU_000445_88_5_6"/>
<dbReference type="Proteomes" id="UP000002412">
    <property type="component" value="Chromosome"/>
</dbReference>
<dbReference type="GO" id="GO:0005737">
    <property type="term" value="C:cytoplasm"/>
    <property type="evidence" value="ECO:0007669"/>
    <property type="project" value="UniProtKB-SubCell"/>
</dbReference>
<dbReference type="GO" id="GO:0003700">
    <property type="term" value="F:DNA-binding transcription factor activity"/>
    <property type="evidence" value="ECO:0007669"/>
    <property type="project" value="UniProtKB-UniRule"/>
</dbReference>
<dbReference type="GO" id="GO:0043565">
    <property type="term" value="F:sequence-specific DNA binding"/>
    <property type="evidence" value="ECO:0007669"/>
    <property type="project" value="InterPro"/>
</dbReference>
<dbReference type="GO" id="GO:0045893">
    <property type="term" value="P:positive regulation of DNA-templated transcription"/>
    <property type="evidence" value="ECO:0007669"/>
    <property type="project" value="UniProtKB-UniRule"/>
</dbReference>
<dbReference type="GO" id="GO:0019299">
    <property type="term" value="P:rhamnose metabolic process"/>
    <property type="evidence" value="ECO:0007669"/>
    <property type="project" value="UniProtKB-UniRule"/>
</dbReference>
<dbReference type="CDD" id="cd06977">
    <property type="entry name" value="cupin_RhaR_RhaS-like_N"/>
    <property type="match status" value="1"/>
</dbReference>
<dbReference type="Gene3D" id="1.10.10.60">
    <property type="entry name" value="Homeodomain-like"/>
    <property type="match status" value="1"/>
</dbReference>
<dbReference type="Gene3D" id="2.60.120.10">
    <property type="entry name" value="Jelly Rolls"/>
    <property type="match status" value="1"/>
</dbReference>
<dbReference type="HAMAP" id="MF_01534">
    <property type="entry name" value="HTH_type_RhaS"/>
    <property type="match status" value="1"/>
</dbReference>
<dbReference type="InterPro" id="IPR003313">
    <property type="entry name" value="AraC-bd"/>
</dbReference>
<dbReference type="InterPro" id="IPR050204">
    <property type="entry name" value="AraC_XylS_family_regulators"/>
</dbReference>
<dbReference type="InterPro" id="IPR009057">
    <property type="entry name" value="Homeodomain-like_sf"/>
</dbReference>
<dbReference type="InterPro" id="IPR037923">
    <property type="entry name" value="HTH-like"/>
</dbReference>
<dbReference type="InterPro" id="IPR018060">
    <property type="entry name" value="HTH_AraC"/>
</dbReference>
<dbReference type="InterPro" id="IPR018062">
    <property type="entry name" value="HTH_AraC-typ_CS"/>
</dbReference>
<dbReference type="InterPro" id="IPR047220">
    <property type="entry name" value="RhaR_RhaS-like_N"/>
</dbReference>
<dbReference type="InterPro" id="IPR014710">
    <property type="entry name" value="RmlC-like_jellyroll"/>
</dbReference>
<dbReference type="InterPro" id="IPR020449">
    <property type="entry name" value="Tscrpt_reg_AraC-type_HTH"/>
</dbReference>
<dbReference type="InterPro" id="IPR023609">
    <property type="entry name" value="Tscrpt_reg_HTH_RhaS"/>
</dbReference>
<dbReference type="NCBIfam" id="NF010028">
    <property type="entry name" value="PRK13503.1"/>
    <property type="match status" value="1"/>
</dbReference>
<dbReference type="PANTHER" id="PTHR46796:SF13">
    <property type="entry name" value="HTH-TYPE TRANSCRIPTIONAL ACTIVATOR RHAS"/>
    <property type="match status" value="1"/>
</dbReference>
<dbReference type="PANTHER" id="PTHR46796">
    <property type="entry name" value="HTH-TYPE TRANSCRIPTIONAL ACTIVATOR RHAS-RELATED"/>
    <property type="match status" value="1"/>
</dbReference>
<dbReference type="Pfam" id="PF02311">
    <property type="entry name" value="AraC_binding"/>
    <property type="match status" value="1"/>
</dbReference>
<dbReference type="Pfam" id="PF12833">
    <property type="entry name" value="HTH_18"/>
    <property type="match status" value="1"/>
</dbReference>
<dbReference type="PRINTS" id="PR00032">
    <property type="entry name" value="HTHARAC"/>
</dbReference>
<dbReference type="SMART" id="SM00342">
    <property type="entry name" value="HTH_ARAC"/>
    <property type="match status" value="1"/>
</dbReference>
<dbReference type="SUPFAM" id="SSF46689">
    <property type="entry name" value="Homeodomain-like"/>
    <property type="match status" value="2"/>
</dbReference>
<dbReference type="SUPFAM" id="SSF51215">
    <property type="entry name" value="Regulatory protein AraC"/>
    <property type="match status" value="1"/>
</dbReference>
<dbReference type="PROSITE" id="PS00041">
    <property type="entry name" value="HTH_ARAC_FAMILY_1"/>
    <property type="match status" value="1"/>
</dbReference>
<dbReference type="PROSITE" id="PS01124">
    <property type="entry name" value="HTH_ARAC_FAMILY_2"/>
    <property type="match status" value="1"/>
</dbReference>